<organism>
    <name type="scientific">Escherichia coli O127:H6 (strain E2348/69 / EPEC)</name>
    <dbReference type="NCBI Taxonomy" id="574521"/>
    <lineage>
        <taxon>Bacteria</taxon>
        <taxon>Pseudomonadati</taxon>
        <taxon>Pseudomonadota</taxon>
        <taxon>Gammaproteobacteria</taxon>
        <taxon>Enterobacterales</taxon>
        <taxon>Enterobacteriaceae</taxon>
        <taxon>Escherichia</taxon>
    </lineage>
</organism>
<dbReference type="EC" id="4.2.1.11" evidence="1"/>
<dbReference type="EMBL" id="FM180568">
    <property type="protein sequence ID" value="CAS10594.1"/>
    <property type="molecule type" value="Genomic_DNA"/>
</dbReference>
<dbReference type="RefSeq" id="WP_000036723.1">
    <property type="nucleotide sequence ID" value="NC_011601.1"/>
</dbReference>
<dbReference type="SMR" id="B7UHJ5"/>
<dbReference type="GeneID" id="93779219"/>
<dbReference type="KEGG" id="ecg:E2348C_3046"/>
<dbReference type="HOGENOM" id="CLU_031223_2_1_6"/>
<dbReference type="UniPathway" id="UPA00109">
    <property type="reaction ID" value="UER00187"/>
</dbReference>
<dbReference type="Proteomes" id="UP000008205">
    <property type="component" value="Chromosome"/>
</dbReference>
<dbReference type="GO" id="GO:0009986">
    <property type="term" value="C:cell surface"/>
    <property type="evidence" value="ECO:0007669"/>
    <property type="project" value="UniProtKB-SubCell"/>
</dbReference>
<dbReference type="GO" id="GO:0005576">
    <property type="term" value="C:extracellular region"/>
    <property type="evidence" value="ECO:0007669"/>
    <property type="project" value="UniProtKB-SubCell"/>
</dbReference>
<dbReference type="GO" id="GO:0000015">
    <property type="term" value="C:phosphopyruvate hydratase complex"/>
    <property type="evidence" value="ECO:0007669"/>
    <property type="project" value="InterPro"/>
</dbReference>
<dbReference type="GO" id="GO:0000287">
    <property type="term" value="F:magnesium ion binding"/>
    <property type="evidence" value="ECO:0007669"/>
    <property type="project" value="UniProtKB-UniRule"/>
</dbReference>
<dbReference type="GO" id="GO:0004634">
    <property type="term" value="F:phosphopyruvate hydratase activity"/>
    <property type="evidence" value="ECO:0007669"/>
    <property type="project" value="UniProtKB-UniRule"/>
</dbReference>
<dbReference type="GO" id="GO:0006096">
    <property type="term" value="P:glycolytic process"/>
    <property type="evidence" value="ECO:0007669"/>
    <property type="project" value="UniProtKB-UniRule"/>
</dbReference>
<dbReference type="CDD" id="cd03313">
    <property type="entry name" value="enolase"/>
    <property type="match status" value="1"/>
</dbReference>
<dbReference type="FunFam" id="3.20.20.120:FF:000001">
    <property type="entry name" value="Enolase"/>
    <property type="match status" value="1"/>
</dbReference>
<dbReference type="FunFam" id="3.30.390.10:FF:000001">
    <property type="entry name" value="Enolase"/>
    <property type="match status" value="1"/>
</dbReference>
<dbReference type="Gene3D" id="3.20.20.120">
    <property type="entry name" value="Enolase-like C-terminal domain"/>
    <property type="match status" value="1"/>
</dbReference>
<dbReference type="Gene3D" id="3.30.390.10">
    <property type="entry name" value="Enolase-like, N-terminal domain"/>
    <property type="match status" value="1"/>
</dbReference>
<dbReference type="HAMAP" id="MF_00318">
    <property type="entry name" value="Enolase"/>
    <property type="match status" value="1"/>
</dbReference>
<dbReference type="InterPro" id="IPR000941">
    <property type="entry name" value="Enolase"/>
</dbReference>
<dbReference type="InterPro" id="IPR036849">
    <property type="entry name" value="Enolase-like_C_sf"/>
</dbReference>
<dbReference type="InterPro" id="IPR029017">
    <property type="entry name" value="Enolase-like_N"/>
</dbReference>
<dbReference type="InterPro" id="IPR020810">
    <property type="entry name" value="Enolase_C"/>
</dbReference>
<dbReference type="InterPro" id="IPR020809">
    <property type="entry name" value="Enolase_CS"/>
</dbReference>
<dbReference type="InterPro" id="IPR020811">
    <property type="entry name" value="Enolase_N"/>
</dbReference>
<dbReference type="NCBIfam" id="TIGR01060">
    <property type="entry name" value="eno"/>
    <property type="match status" value="1"/>
</dbReference>
<dbReference type="PANTHER" id="PTHR11902">
    <property type="entry name" value="ENOLASE"/>
    <property type="match status" value="1"/>
</dbReference>
<dbReference type="PANTHER" id="PTHR11902:SF1">
    <property type="entry name" value="ENOLASE"/>
    <property type="match status" value="1"/>
</dbReference>
<dbReference type="Pfam" id="PF00113">
    <property type="entry name" value="Enolase_C"/>
    <property type="match status" value="1"/>
</dbReference>
<dbReference type="Pfam" id="PF03952">
    <property type="entry name" value="Enolase_N"/>
    <property type="match status" value="1"/>
</dbReference>
<dbReference type="PIRSF" id="PIRSF001400">
    <property type="entry name" value="Enolase"/>
    <property type="match status" value="1"/>
</dbReference>
<dbReference type="PRINTS" id="PR00148">
    <property type="entry name" value="ENOLASE"/>
</dbReference>
<dbReference type="SFLD" id="SFLDS00001">
    <property type="entry name" value="Enolase"/>
    <property type="match status" value="1"/>
</dbReference>
<dbReference type="SFLD" id="SFLDF00002">
    <property type="entry name" value="enolase"/>
    <property type="match status" value="1"/>
</dbReference>
<dbReference type="SMART" id="SM01192">
    <property type="entry name" value="Enolase_C"/>
    <property type="match status" value="1"/>
</dbReference>
<dbReference type="SMART" id="SM01193">
    <property type="entry name" value="Enolase_N"/>
    <property type="match status" value="1"/>
</dbReference>
<dbReference type="SUPFAM" id="SSF51604">
    <property type="entry name" value="Enolase C-terminal domain-like"/>
    <property type="match status" value="1"/>
</dbReference>
<dbReference type="SUPFAM" id="SSF54826">
    <property type="entry name" value="Enolase N-terminal domain-like"/>
    <property type="match status" value="1"/>
</dbReference>
<dbReference type="PROSITE" id="PS00164">
    <property type="entry name" value="ENOLASE"/>
    <property type="match status" value="1"/>
</dbReference>
<protein>
    <recommendedName>
        <fullName evidence="1">Enolase</fullName>
        <ecNumber evidence="1">4.2.1.11</ecNumber>
    </recommendedName>
    <alternativeName>
        <fullName evidence="1">2-phospho-D-glycerate hydro-lyase</fullName>
    </alternativeName>
    <alternativeName>
        <fullName evidence="1">2-phosphoglycerate dehydratase</fullName>
    </alternativeName>
</protein>
<keyword id="KW-0963">Cytoplasm</keyword>
<keyword id="KW-0324">Glycolysis</keyword>
<keyword id="KW-0456">Lyase</keyword>
<keyword id="KW-0460">Magnesium</keyword>
<keyword id="KW-0479">Metal-binding</keyword>
<keyword id="KW-1185">Reference proteome</keyword>
<keyword id="KW-0964">Secreted</keyword>
<proteinExistence type="inferred from homology"/>
<gene>
    <name evidence="1" type="primary">eno</name>
    <name type="ordered locus">E2348C_3046</name>
</gene>
<accession>B7UHJ5</accession>
<feature type="chain" id="PRO_1000189949" description="Enolase">
    <location>
        <begin position="1"/>
        <end position="432"/>
    </location>
</feature>
<feature type="active site" description="Proton donor" evidence="1">
    <location>
        <position position="209"/>
    </location>
</feature>
<feature type="active site" description="Proton acceptor" evidence="1">
    <location>
        <position position="342"/>
    </location>
</feature>
<feature type="binding site" evidence="1">
    <location>
        <position position="167"/>
    </location>
    <ligand>
        <name>(2R)-2-phosphoglycerate</name>
        <dbReference type="ChEBI" id="CHEBI:58289"/>
    </ligand>
</feature>
<feature type="binding site" evidence="1">
    <location>
        <position position="246"/>
    </location>
    <ligand>
        <name>Mg(2+)</name>
        <dbReference type="ChEBI" id="CHEBI:18420"/>
    </ligand>
</feature>
<feature type="binding site" evidence="1">
    <location>
        <position position="290"/>
    </location>
    <ligand>
        <name>Mg(2+)</name>
        <dbReference type="ChEBI" id="CHEBI:18420"/>
    </ligand>
</feature>
<feature type="binding site" evidence="1">
    <location>
        <position position="317"/>
    </location>
    <ligand>
        <name>Mg(2+)</name>
        <dbReference type="ChEBI" id="CHEBI:18420"/>
    </ligand>
</feature>
<feature type="binding site" evidence="1">
    <location>
        <position position="342"/>
    </location>
    <ligand>
        <name>(2R)-2-phosphoglycerate</name>
        <dbReference type="ChEBI" id="CHEBI:58289"/>
    </ligand>
</feature>
<feature type="binding site" evidence="1">
    <location>
        <position position="371"/>
    </location>
    <ligand>
        <name>(2R)-2-phosphoglycerate</name>
        <dbReference type="ChEBI" id="CHEBI:58289"/>
    </ligand>
</feature>
<feature type="binding site" evidence="1">
    <location>
        <position position="372"/>
    </location>
    <ligand>
        <name>(2R)-2-phosphoglycerate</name>
        <dbReference type="ChEBI" id="CHEBI:58289"/>
    </ligand>
</feature>
<feature type="binding site" evidence="1">
    <location>
        <position position="393"/>
    </location>
    <ligand>
        <name>(2R)-2-phosphoglycerate</name>
        <dbReference type="ChEBI" id="CHEBI:58289"/>
    </ligand>
</feature>
<name>ENO_ECO27</name>
<sequence>MSKIVKIIGREIIDSRGNPTVEAEVHLEGGFVGMAAAPSGASTGSREALELRDGDKSRFLGKGVTKAVAAVNGPIAQALIGKDAKDQAGIDKIMIDLDGTENKSKFGANAILAVSLANAKAAAAAKGMPLYEHIAELNGTPGKYSMPVPMMNIINGGEHADNNVDIQEFMIQPVGAKTVKEAIRMGSEVFHHLAKVLKAKGMNTAVGDEGGYAPNLGSNAEALAVIAEAVKAAGYELGKDITLAMDCAASEFYKDGKYVLAGEGNKAFTSEEFTHFLEELTKQYPIVSIEDGLDESDWDGFAYQTKVLGDKIQLVGDDLFVTNTKILKEGIEKGIANSILIKFNQIGSLTETLAAIKMAKDAGYTAVISHRSGETEDATIADLAVGTAAGQIKTGSMSRSDRVAKYNQLIRIEEALGEKAPYNGRKEIKGQA</sequence>
<comment type="function">
    <text evidence="1">Catalyzes the reversible conversion of 2-phosphoglycerate (2-PG) into phosphoenolpyruvate (PEP). It is essential for the degradation of carbohydrates via glycolysis.</text>
</comment>
<comment type="catalytic activity">
    <reaction evidence="1">
        <text>(2R)-2-phosphoglycerate = phosphoenolpyruvate + H2O</text>
        <dbReference type="Rhea" id="RHEA:10164"/>
        <dbReference type="ChEBI" id="CHEBI:15377"/>
        <dbReference type="ChEBI" id="CHEBI:58289"/>
        <dbReference type="ChEBI" id="CHEBI:58702"/>
        <dbReference type="EC" id="4.2.1.11"/>
    </reaction>
</comment>
<comment type="cofactor">
    <cofactor evidence="1">
        <name>Mg(2+)</name>
        <dbReference type="ChEBI" id="CHEBI:18420"/>
    </cofactor>
    <text evidence="1">Binds a second Mg(2+) ion via substrate during catalysis.</text>
</comment>
<comment type="pathway">
    <text evidence="1">Carbohydrate degradation; glycolysis; pyruvate from D-glyceraldehyde 3-phosphate: step 4/5.</text>
</comment>
<comment type="subunit">
    <text evidence="1">Component of the RNA degradosome, a multiprotein complex involved in RNA processing and mRNA degradation.</text>
</comment>
<comment type="subcellular location">
    <subcellularLocation>
        <location evidence="1">Cytoplasm</location>
    </subcellularLocation>
    <subcellularLocation>
        <location evidence="1">Secreted</location>
    </subcellularLocation>
    <subcellularLocation>
        <location evidence="1">Cell surface</location>
    </subcellularLocation>
    <text evidence="1">Fractions of enolase are present in both the cytoplasm and on the cell surface.</text>
</comment>
<comment type="similarity">
    <text evidence="1">Belongs to the enolase family.</text>
</comment>
<evidence type="ECO:0000255" key="1">
    <source>
        <dbReference type="HAMAP-Rule" id="MF_00318"/>
    </source>
</evidence>
<reference key="1">
    <citation type="journal article" date="2009" name="J. Bacteriol.">
        <title>Complete genome sequence and comparative genome analysis of enteropathogenic Escherichia coli O127:H6 strain E2348/69.</title>
        <authorList>
            <person name="Iguchi A."/>
            <person name="Thomson N.R."/>
            <person name="Ogura Y."/>
            <person name="Saunders D."/>
            <person name="Ooka T."/>
            <person name="Henderson I.R."/>
            <person name="Harris D."/>
            <person name="Asadulghani M."/>
            <person name="Kurokawa K."/>
            <person name="Dean P."/>
            <person name="Kenny B."/>
            <person name="Quail M.A."/>
            <person name="Thurston S."/>
            <person name="Dougan G."/>
            <person name="Hayashi T."/>
            <person name="Parkhill J."/>
            <person name="Frankel G."/>
        </authorList>
    </citation>
    <scope>NUCLEOTIDE SEQUENCE [LARGE SCALE GENOMIC DNA]</scope>
    <source>
        <strain>E2348/69 / EPEC</strain>
    </source>
</reference>